<comment type="function">
    <text evidence="1">Part of ribonuclease P, a protein complex that generates mature tRNA molecules by cleaving their 5'-ends.</text>
</comment>
<comment type="catalytic activity">
    <reaction evidence="1">
        <text>Endonucleolytic cleavage of RNA, removing 5'-extranucleotides from tRNA precursor.</text>
        <dbReference type="EC" id="3.1.26.5"/>
    </reaction>
</comment>
<comment type="subunit">
    <text evidence="1">Consists of a catalytic RNA component and at least 4-5 protein subunits.</text>
</comment>
<comment type="subcellular location">
    <subcellularLocation>
        <location evidence="1">Cytoplasm</location>
    </subcellularLocation>
</comment>
<comment type="similarity">
    <text evidence="1">Belongs to the eukaryotic/archaeal RNase P protein component 3 family.</text>
</comment>
<feature type="chain" id="PRO_1000046629" description="Ribonuclease P protein component 3">
    <location>
        <begin position="1"/>
        <end position="231"/>
    </location>
</feature>
<name>RNP3_METVS</name>
<accession>A6US39</accession>
<protein>
    <recommendedName>
        <fullName evidence="1">Ribonuclease P protein component 3</fullName>
        <shortName evidence="1">RNase P component 3</shortName>
        <ecNumber evidence="1">3.1.26.5</ecNumber>
    </recommendedName>
    <alternativeName>
        <fullName evidence="1">Rpp30</fullName>
    </alternativeName>
</protein>
<dbReference type="EC" id="3.1.26.5" evidence="1"/>
<dbReference type="EMBL" id="CP000742">
    <property type="protein sequence ID" value="ABR55311.1"/>
    <property type="molecule type" value="Genomic_DNA"/>
</dbReference>
<dbReference type="RefSeq" id="WP_012066225.1">
    <property type="nucleotide sequence ID" value="NC_009634.1"/>
</dbReference>
<dbReference type="SMR" id="A6US39"/>
<dbReference type="STRING" id="406327.Mevan_1415"/>
<dbReference type="GeneID" id="5325160"/>
<dbReference type="KEGG" id="mvn:Mevan_1415"/>
<dbReference type="eggNOG" id="arCOG00307">
    <property type="taxonomic scope" value="Archaea"/>
</dbReference>
<dbReference type="HOGENOM" id="CLU_074509_0_0_2"/>
<dbReference type="OrthoDB" id="85765at2157"/>
<dbReference type="Proteomes" id="UP000001107">
    <property type="component" value="Chromosome"/>
</dbReference>
<dbReference type="GO" id="GO:0005737">
    <property type="term" value="C:cytoplasm"/>
    <property type="evidence" value="ECO:0007669"/>
    <property type="project" value="UniProtKB-SubCell"/>
</dbReference>
<dbReference type="GO" id="GO:0030677">
    <property type="term" value="C:ribonuclease P complex"/>
    <property type="evidence" value="ECO:0007669"/>
    <property type="project" value="UniProtKB-UniRule"/>
</dbReference>
<dbReference type="GO" id="GO:0004526">
    <property type="term" value="F:ribonuclease P activity"/>
    <property type="evidence" value="ECO:0007669"/>
    <property type="project" value="UniProtKB-UniRule"/>
</dbReference>
<dbReference type="GO" id="GO:0001682">
    <property type="term" value="P:tRNA 5'-leader removal"/>
    <property type="evidence" value="ECO:0007669"/>
    <property type="project" value="UniProtKB-UniRule"/>
</dbReference>
<dbReference type="Gene3D" id="3.20.20.140">
    <property type="entry name" value="Metal-dependent hydrolases"/>
    <property type="match status" value="1"/>
</dbReference>
<dbReference type="HAMAP" id="MF_00756">
    <property type="entry name" value="RNase_P_3"/>
    <property type="match status" value="1"/>
</dbReference>
<dbReference type="InterPro" id="IPR016195">
    <property type="entry name" value="Pol/histidinol_Pase-like"/>
</dbReference>
<dbReference type="InterPro" id="IPR023539">
    <property type="entry name" value="RNase_P_comp-3_arc"/>
</dbReference>
<dbReference type="InterPro" id="IPR002738">
    <property type="entry name" value="RNase_P_p30"/>
</dbReference>
<dbReference type="NCBIfam" id="NF046108">
    <property type="entry name" value="RNaseP3Mthcoc"/>
    <property type="match status" value="1"/>
</dbReference>
<dbReference type="Pfam" id="PF01876">
    <property type="entry name" value="RNase_P_p30"/>
    <property type="match status" value="1"/>
</dbReference>
<dbReference type="SUPFAM" id="SSF89550">
    <property type="entry name" value="PHP domain-like"/>
    <property type="match status" value="1"/>
</dbReference>
<reference key="1">
    <citation type="submission" date="2007-06" db="EMBL/GenBank/DDBJ databases">
        <title>Complete sequence of Methanococcus vannielii SB.</title>
        <authorList>
            <consortium name="US DOE Joint Genome Institute"/>
            <person name="Copeland A."/>
            <person name="Lucas S."/>
            <person name="Lapidus A."/>
            <person name="Barry K."/>
            <person name="Glavina del Rio T."/>
            <person name="Dalin E."/>
            <person name="Tice H."/>
            <person name="Pitluck S."/>
            <person name="Chain P."/>
            <person name="Malfatti S."/>
            <person name="Shin M."/>
            <person name="Vergez L."/>
            <person name="Schmutz J."/>
            <person name="Larimer F."/>
            <person name="Land M."/>
            <person name="Hauser L."/>
            <person name="Kyrpides N."/>
            <person name="Anderson I."/>
            <person name="Sieprawska-Lupa M."/>
            <person name="Whitman W.B."/>
            <person name="Richardson P."/>
        </authorList>
    </citation>
    <scope>NUCLEOTIDE SEQUENCE [LARGE SCALE GENOMIC DNA]</scope>
    <source>
        <strain>ATCC 35089 / DSM 1224 / JCM 13029 / OCM 148 / SB</strain>
    </source>
</reference>
<proteinExistence type="inferred from homology"/>
<keyword id="KW-0963">Cytoplasm</keyword>
<keyword id="KW-0255">Endonuclease</keyword>
<keyword id="KW-0378">Hydrolase</keyword>
<keyword id="KW-0540">Nuclease</keyword>
<keyword id="KW-0819">tRNA processing</keyword>
<gene>
    <name evidence="1" type="primary">rnp3</name>
    <name type="ordered locus">Mevan_1415</name>
</gene>
<organism>
    <name type="scientific">Methanococcus vannielii (strain ATCC 35089 / DSM 1224 / JCM 13029 / OCM 148 / SB)</name>
    <dbReference type="NCBI Taxonomy" id="406327"/>
    <lineage>
        <taxon>Archaea</taxon>
        <taxon>Methanobacteriati</taxon>
        <taxon>Methanobacteriota</taxon>
        <taxon>Methanomada group</taxon>
        <taxon>Methanococci</taxon>
        <taxon>Methanococcales</taxon>
        <taxon>Methanococcaceae</taxon>
        <taxon>Methanococcus</taxon>
    </lineage>
</organism>
<sequence>MLEKVFDINQIFDEKGIMTLKRFGWDGSVAFQNHTDFSDELIDNAKKYGEENGILVYSGLKILSNNQNEIDKIVKKYRNRVEMIFIEGGDIKINRKTLESNETDVLSTPELNRADNGLDHVLTRLGSTNRVSIELNLSNLIKNKNYDRARVLWAFQRNLMLCKKYDTPVVISSGANDIYGIKAPDDVRGFLNTLVDQMYAKKIMETTSKIVNYRLHMKKSNVLMYGLEIVE</sequence>
<evidence type="ECO:0000255" key="1">
    <source>
        <dbReference type="HAMAP-Rule" id="MF_00756"/>
    </source>
</evidence>